<evidence type="ECO:0000250" key="1"/>
<evidence type="ECO:0000255" key="2"/>
<evidence type="ECO:0000255" key="3">
    <source>
        <dbReference type="PROSITE-ProRule" id="PRU00289"/>
    </source>
</evidence>
<evidence type="ECO:0000256" key="4">
    <source>
        <dbReference type="SAM" id="MobiDB-lite"/>
    </source>
</evidence>
<evidence type="ECO:0000269" key="5">
    <source>
    </source>
</evidence>
<evidence type="ECO:0000269" key="6">
    <source>
    </source>
</evidence>
<evidence type="ECO:0000305" key="7"/>
<evidence type="ECO:0000305" key="8">
    <source>
    </source>
</evidence>
<evidence type="ECO:0000305" key="9">
    <source>
    </source>
</evidence>
<evidence type="ECO:0000305" key="10">
    <source>
    </source>
</evidence>
<evidence type="ECO:0007829" key="11">
    <source>
        <dbReference type="PDB" id="2IUT"/>
    </source>
</evidence>
<evidence type="ECO:0007829" key="12">
    <source>
        <dbReference type="PDB" id="2IUU"/>
    </source>
</evidence>
<evidence type="ECO:0007829" key="13">
    <source>
        <dbReference type="PDB" id="2J5O"/>
    </source>
</evidence>
<evidence type="ECO:0007829" key="14">
    <source>
        <dbReference type="PDB" id="2VE8"/>
    </source>
</evidence>
<proteinExistence type="evidence at protein level"/>
<organism>
    <name type="scientific">Pseudomonas aeruginosa (strain ATCC 15692 / DSM 22644 / CIP 104116 / JCM 14847 / LMG 12228 / 1C / PRS 101 / PAO1)</name>
    <dbReference type="NCBI Taxonomy" id="208964"/>
    <lineage>
        <taxon>Bacteria</taxon>
        <taxon>Pseudomonadati</taxon>
        <taxon>Pseudomonadota</taxon>
        <taxon>Gammaproteobacteria</taxon>
        <taxon>Pseudomonadales</taxon>
        <taxon>Pseudomonadaceae</taxon>
        <taxon>Pseudomonas</taxon>
    </lineage>
</organism>
<protein>
    <recommendedName>
        <fullName>DNA translocase FtsK</fullName>
    </recommendedName>
</protein>
<comment type="function">
    <text evidence="8 10">Essential cell division protein that coordinates cell division and chromosome segregation. The N-terminus is involved in assembly of the cell-division machinery. The C-terminus functions as a DNA motor that moves dsDNA in an ATP-dependent manner towards the dif recombination site, which is located within the replication terminus region. Translocation stops specifically at Xer-dif sites, where FtsK interacts with the Xer recombinase, allowing activation of chromosome unlinking by recombination. FtsK orienting polar sequences (KOPS) guide the direction of DNA translocation. FtsK can remove proteins from DNA as it translocates, but translocation stops specifically at XerCD-dif site, thereby preventing removal of XerC and XerD from dif (Probable).</text>
</comment>
<comment type="subunit">
    <text evidence="5 6">Homohexamer. Forms a ring that surrounds DNA.</text>
</comment>
<comment type="subcellular location">
    <subcellularLocation>
        <location evidence="1">Cell inner membrane</location>
        <topology evidence="1">Multi-pass membrane protein</topology>
    </subcellularLocation>
    <text evidence="1">Located at the septum.</text>
</comment>
<comment type="domain">
    <text evidence="9">Consists of an N-terminal domain, which is sufficient for the localization to the septal ring and is required for cell division, followed by a linker domain, and a C-terminal domain, which forms the translocation motor involved in chromosome segregation. The C-terminal domain can be further subdivided into alpha, beta and gamma subdomains. The alpha and beta subdomains multimerise to produce a hexameric ring, contain the nucleotide binding motif and form the DNA pump. The gamma subdomain is a regulatory subdomain that controls translocation of DNA by recognition of KOPS motifs and interacts with XerD recombinase (Probable).</text>
</comment>
<comment type="similarity">
    <text evidence="7">Belongs to the FtsK/SpoIIIE/SftA family.</text>
</comment>
<keyword id="KW-0002">3D-structure</keyword>
<keyword id="KW-0067">ATP-binding</keyword>
<keyword id="KW-0131">Cell cycle</keyword>
<keyword id="KW-0132">Cell division</keyword>
<keyword id="KW-0997">Cell inner membrane</keyword>
<keyword id="KW-1003">Cell membrane</keyword>
<keyword id="KW-0159">Chromosome partition</keyword>
<keyword id="KW-0238">DNA-binding</keyword>
<keyword id="KW-0472">Membrane</keyword>
<keyword id="KW-0547">Nucleotide-binding</keyword>
<keyword id="KW-1185">Reference proteome</keyword>
<keyword id="KW-0812">Transmembrane</keyword>
<keyword id="KW-1133">Transmembrane helix</keyword>
<name>FTSK_PSEAE</name>
<sequence length="811" mass="88894">MRRKNSDLKDSTTASHAAAWRQQLHSRLKEGVLIALGALCLYLWMALLTYDSADPSWSHSSQVDQVQNAAGRLGAVSADILFMTLGYFAYLFPLLLGIKTWQVFRRRNLPWEWNTWLFSWRLVGLIFLILAGSALAYIHFHASGHMPASASAGGAIGQSLGRVAVDALNVQGSTLVFFALFLFGLTVFADLSWFKVMDVTGKITLDFFELIQNAFNRWMGARAERKQLVAQLREVDERVAEVVAPSVPDRREQSKAKERLLEREEALAKHMSEREKRPPPKIDPPPSPKAPEPSKRVLKEKQAPLFVDTAVEGTLPPLSLLDPAEVKQKSYSPESLEAMSRLLEIKLKEFGVEVSVDSVHPGPVITRFEIQPAAGVKVSRISNLAKDLARSLAVISVRVVEVIPGKTTVGIEIPNEDRQMVRFSEVLSSPEYDEHKSTVPLALGHDIGGRPIITDLAKMPHLLVAGTTGSGKSVGVNAMLLSILFKSTPSEARLIMIDPKMLELSIYEGIPHLLCPVVTDMKEAANALRWSVAEMERRYRLMAAMGVRNLAGFNRKVKDAEEAGTPLTDPLFRRESPDDEPPQLSTLPTIVVVVDEFADMMMIVGKKVEELIARIAQKARAAGIHLILATQRPSVDVITGLIKANIPTRIAFQVSSKIDSRTILDQGGAEQLLGHGDMLYLPPGTGLPIRVHGAFVSDDEVHRVVEAWKLRGAPDYIEDILAGVDEGGGGGGSFDGGDGSGEGSEDDPLYDEAVRFVTESRRASISAVQRKLKIGYNRAARMIEAMEMAGVVTPMNTNGSREVIAPAPVRD</sequence>
<accession>Q9I0M3</accession>
<dbReference type="EMBL" id="AE004091">
    <property type="protein sequence ID" value="AAG06003.1"/>
    <property type="molecule type" value="Genomic_DNA"/>
</dbReference>
<dbReference type="PIR" id="E83318">
    <property type="entry name" value="E83318"/>
</dbReference>
<dbReference type="RefSeq" id="NP_251305.1">
    <property type="nucleotide sequence ID" value="NC_002516.2"/>
</dbReference>
<dbReference type="RefSeq" id="WP_010895627.1">
    <property type="nucleotide sequence ID" value="NZ_QZGE01000008.1"/>
</dbReference>
<dbReference type="PDB" id="2IUT">
    <property type="method" value="X-ray"/>
    <property type="resolution" value="2.25 A"/>
    <property type="chains" value="A/B=247-811"/>
</dbReference>
<dbReference type="PDB" id="2IUU">
    <property type="method" value="X-ray"/>
    <property type="resolution" value="2.90 A"/>
    <property type="chains" value="A/B/C/D/E/F=247-728"/>
</dbReference>
<dbReference type="PDB" id="2J5O">
    <property type="method" value="NMR"/>
    <property type="chains" value="A=742-811"/>
</dbReference>
<dbReference type="PDB" id="2VE8">
    <property type="method" value="X-ray"/>
    <property type="resolution" value="1.40 A"/>
    <property type="chains" value="A/B/C/D/E/F/G/H=739-811"/>
</dbReference>
<dbReference type="PDB" id="2VE9">
    <property type="method" value="X-ray"/>
    <property type="resolution" value="1.90 A"/>
    <property type="chains" value="A/B/C/D/E/F=739-811"/>
</dbReference>
<dbReference type="PDB" id="6T8B">
    <property type="method" value="EM"/>
    <property type="resolution" value="3.65 A"/>
    <property type="chains" value="A/B/C/D/E/F=247-728"/>
</dbReference>
<dbReference type="PDB" id="6T8G">
    <property type="method" value="EM"/>
    <property type="resolution" value="4.34 A"/>
    <property type="chains" value="A/B/C/D/E/F=247-728"/>
</dbReference>
<dbReference type="PDB" id="6T8O">
    <property type="method" value="EM"/>
    <property type="resolution" value="3.99 A"/>
    <property type="chains" value="A/B/C/D/E/F=247-728"/>
</dbReference>
<dbReference type="PDBsum" id="2IUT"/>
<dbReference type="PDBsum" id="2IUU"/>
<dbReference type="PDBsum" id="2J5O"/>
<dbReference type="PDBsum" id="2VE8"/>
<dbReference type="PDBsum" id="2VE9"/>
<dbReference type="PDBsum" id="6T8B"/>
<dbReference type="PDBsum" id="6T8G"/>
<dbReference type="PDBsum" id="6T8O"/>
<dbReference type="EMDB" id="EMD-10399"/>
<dbReference type="EMDB" id="EMD-10400"/>
<dbReference type="EMDB" id="EMD-10402"/>
<dbReference type="EMDB" id="EMD-10403"/>
<dbReference type="EMDB" id="EMD-10404"/>
<dbReference type="EMDB" id="EMD-10405"/>
<dbReference type="SMR" id="Q9I0M3"/>
<dbReference type="FunCoup" id="Q9I0M3">
    <property type="interactions" value="191"/>
</dbReference>
<dbReference type="STRING" id="208964.PA2615"/>
<dbReference type="PaxDb" id="208964-PA2615"/>
<dbReference type="GeneID" id="882321"/>
<dbReference type="KEGG" id="pae:PA2615"/>
<dbReference type="PATRIC" id="fig|208964.12.peg.2736"/>
<dbReference type="PseudoCAP" id="PA2615"/>
<dbReference type="HOGENOM" id="CLU_001981_9_7_6"/>
<dbReference type="InParanoid" id="Q9I0M3"/>
<dbReference type="OrthoDB" id="9807790at2"/>
<dbReference type="PhylomeDB" id="Q9I0M3"/>
<dbReference type="BioCyc" id="PAER208964:G1FZ6-2655-MONOMER"/>
<dbReference type="EvolutionaryTrace" id="Q9I0M3"/>
<dbReference type="Proteomes" id="UP000002438">
    <property type="component" value="Chromosome"/>
</dbReference>
<dbReference type="GO" id="GO:0005886">
    <property type="term" value="C:plasma membrane"/>
    <property type="evidence" value="ECO:0007669"/>
    <property type="project" value="UniProtKB-SubCell"/>
</dbReference>
<dbReference type="GO" id="GO:0005524">
    <property type="term" value="F:ATP binding"/>
    <property type="evidence" value="ECO:0007669"/>
    <property type="project" value="UniProtKB-KW"/>
</dbReference>
<dbReference type="GO" id="GO:0003677">
    <property type="term" value="F:DNA binding"/>
    <property type="evidence" value="ECO:0007669"/>
    <property type="project" value="UniProtKB-KW"/>
</dbReference>
<dbReference type="GO" id="GO:0015616">
    <property type="term" value="F:DNA translocase activity"/>
    <property type="evidence" value="ECO:0000318"/>
    <property type="project" value="GO_Central"/>
</dbReference>
<dbReference type="GO" id="GO:0051301">
    <property type="term" value="P:cell division"/>
    <property type="evidence" value="ECO:0007669"/>
    <property type="project" value="UniProtKB-KW"/>
</dbReference>
<dbReference type="GO" id="GO:0071236">
    <property type="term" value="P:cellular response to antibiotic"/>
    <property type="evidence" value="ECO:0000315"/>
    <property type="project" value="PseudoCAP"/>
</dbReference>
<dbReference type="GO" id="GO:0007059">
    <property type="term" value="P:chromosome segregation"/>
    <property type="evidence" value="ECO:0007669"/>
    <property type="project" value="UniProtKB-KW"/>
</dbReference>
<dbReference type="CDD" id="cd01127">
    <property type="entry name" value="TrwB_TraG_TraD_VirD4"/>
    <property type="match status" value="1"/>
</dbReference>
<dbReference type="FunFam" id="3.40.50.300:FF:000209">
    <property type="entry name" value="Cell division protein FtsK"/>
    <property type="match status" value="1"/>
</dbReference>
<dbReference type="FunFam" id="1.10.10.10:FF:000268">
    <property type="entry name" value="DNA translocase FtsK"/>
    <property type="match status" value="1"/>
</dbReference>
<dbReference type="FunFam" id="3.30.980.40:FF:000001">
    <property type="entry name" value="DNA translocase FtsK"/>
    <property type="match status" value="1"/>
</dbReference>
<dbReference type="Gene3D" id="3.30.980.40">
    <property type="match status" value="1"/>
</dbReference>
<dbReference type="Gene3D" id="3.40.50.300">
    <property type="entry name" value="P-loop containing nucleotide triphosphate hydrolases"/>
    <property type="match status" value="1"/>
</dbReference>
<dbReference type="Gene3D" id="1.10.10.10">
    <property type="entry name" value="Winged helix-like DNA-binding domain superfamily/Winged helix DNA-binding domain"/>
    <property type="match status" value="1"/>
</dbReference>
<dbReference type="InterPro" id="IPR050206">
    <property type="entry name" value="FtsK/SpoIIIE/SftA"/>
</dbReference>
<dbReference type="InterPro" id="IPR025199">
    <property type="entry name" value="FtsK_4TM"/>
</dbReference>
<dbReference type="InterPro" id="IPR041027">
    <property type="entry name" value="FtsK_alpha"/>
</dbReference>
<dbReference type="InterPro" id="IPR002543">
    <property type="entry name" value="FtsK_dom"/>
</dbReference>
<dbReference type="InterPro" id="IPR018541">
    <property type="entry name" value="Ftsk_gamma"/>
</dbReference>
<dbReference type="InterPro" id="IPR027417">
    <property type="entry name" value="P-loop_NTPase"/>
</dbReference>
<dbReference type="InterPro" id="IPR036388">
    <property type="entry name" value="WH-like_DNA-bd_sf"/>
</dbReference>
<dbReference type="InterPro" id="IPR036390">
    <property type="entry name" value="WH_DNA-bd_sf"/>
</dbReference>
<dbReference type="PANTHER" id="PTHR22683:SF41">
    <property type="entry name" value="DNA TRANSLOCASE FTSK"/>
    <property type="match status" value="1"/>
</dbReference>
<dbReference type="PANTHER" id="PTHR22683">
    <property type="entry name" value="SPORULATION PROTEIN RELATED"/>
    <property type="match status" value="1"/>
</dbReference>
<dbReference type="Pfam" id="PF13491">
    <property type="entry name" value="FtsK_4TM"/>
    <property type="match status" value="1"/>
</dbReference>
<dbReference type="Pfam" id="PF17854">
    <property type="entry name" value="FtsK_alpha"/>
    <property type="match status" value="1"/>
</dbReference>
<dbReference type="Pfam" id="PF09397">
    <property type="entry name" value="FtsK_gamma"/>
    <property type="match status" value="1"/>
</dbReference>
<dbReference type="Pfam" id="PF01580">
    <property type="entry name" value="FtsK_SpoIIIE"/>
    <property type="match status" value="1"/>
</dbReference>
<dbReference type="SMART" id="SM00843">
    <property type="entry name" value="Ftsk_gamma"/>
    <property type="match status" value="1"/>
</dbReference>
<dbReference type="SUPFAM" id="SSF52540">
    <property type="entry name" value="P-loop containing nucleoside triphosphate hydrolases"/>
    <property type="match status" value="1"/>
</dbReference>
<dbReference type="SUPFAM" id="SSF46785">
    <property type="entry name" value="Winged helix' DNA-binding domain"/>
    <property type="match status" value="1"/>
</dbReference>
<dbReference type="PROSITE" id="PS50901">
    <property type="entry name" value="FTSK"/>
    <property type="match status" value="1"/>
</dbReference>
<feature type="chain" id="PRO_0000098278" description="DNA translocase FtsK">
    <location>
        <begin position="1"/>
        <end position="811"/>
    </location>
</feature>
<feature type="transmembrane region" description="Helical" evidence="2">
    <location>
        <begin position="31"/>
        <end position="53"/>
    </location>
</feature>
<feature type="transmembrane region" description="Helical" evidence="2">
    <location>
        <begin position="73"/>
        <end position="95"/>
    </location>
</feature>
<feature type="transmembrane region" description="Helical" evidence="2">
    <location>
        <begin position="116"/>
        <end position="138"/>
    </location>
</feature>
<feature type="transmembrane region" description="Helical" evidence="2">
    <location>
        <begin position="148"/>
        <end position="165"/>
    </location>
</feature>
<feature type="transmembrane region" description="Helical" evidence="2">
    <location>
        <begin position="172"/>
        <end position="194"/>
    </location>
</feature>
<feature type="topological domain" description="Cytoplasmic" evidence="2">
    <location>
        <begin position="195"/>
        <end position="811"/>
    </location>
</feature>
<feature type="domain" description="FtsK" evidence="3">
    <location>
        <begin position="449"/>
        <end position="661"/>
    </location>
</feature>
<feature type="region of interest" description="Disordered" evidence="4">
    <location>
        <begin position="269"/>
        <end position="296"/>
    </location>
</feature>
<feature type="region of interest" description="Disordered" evidence="4">
    <location>
        <begin position="728"/>
        <end position="748"/>
    </location>
</feature>
<feature type="compositionally biased region" description="Basic and acidic residues" evidence="4">
    <location>
        <begin position="269"/>
        <end position="280"/>
    </location>
</feature>
<feature type="compositionally biased region" description="Pro residues" evidence="4">
    <location>
        <begin position="281"/>
        <end position="291"/>
    </location>
</feature>
<feature type="compositionally biased region" description="Gly residues" evidence="4">
    <location>
        <begin position="728"/>
        <end position="742"/>
    </location>
</feature>
<feature type="binding site">
    <location>
        <begin position="469"/>
        <end position="474"/>
    </location>
    <ligand>
        <name>ATP</name>
        <dbReference type="ChEBI" id="CHEBI:30616"/>
    </ligand>
</feature>
<feature type="binding site">
    <location>
        <position position="675"/>
    </location>
    <ligand>
        <name>ATP</name>
        <dbReference type="ChEBI" id="CHEBI:30616"/>
    </ligand>
</feature>
<feature type="binding site">
    <location>
        <begin position="693"/>
        <end position="694"/>
    </location>
    <ligand>
        <name>ATP</name>
        <dbReference type="ChEBI" id="CHEBI:30616"/>
    </ligand>
</feature>
<feature type="helix" evidence="11">
    <location>
        <begin position="318"/>
        <end position="320"/>
    </location>
</feature>
<feature type="helix" evidence="11">
    <location>
        <begin position="333"/>
        <end position="349"/>
    </location>
</feature>
<feature type="strand" evidence="11">
    <location>
        <begin position="356"/>
        <end position="361"/>
    </location>
</feature>
<feature type="strand" evidence="11">
    <location>
        <begin position="363"/>
        <end position="370"/>
    </location>
</feature>
<feature type="helix" evidence="11">
    <location>
        <begin position="378"/>
        <end position="383"/>
    </location>
</feature>
<feature type="helix" evidence="11">
    <location>
        <begin position="385"/>
        <end position="392"/>
    </location>
</feature>
<feature type="strand" evidence="11">
    <location>
        <begin position="398"/>
        <end position="401"/>
    </location>
</feature>
<feature type="strand" evidence="11">
    <location>
        <begin position="409"/>
        <end position="414"/>
    </location>
</feature>
<feature type="helix" evidence="11">
    <location>
        <begin position="423"/>
        <end position="427"/>
    </location>
</feature>
<feature type="helix" evidence="11">
    <location>
        <begin position="430"/>
        <end position="433"/>
    </location>
</feature>
<feature type="strand" evidence="11">
    <location>
        <begin position="438"/>
        <end position="446"/>
    </location>
</feature>
<feature type="strand" evidence="11">
    <location>
        <begin position="451"/>
        <end position="455"/>
    </location>
</feature>
<feature type="helix" evidence="11">
    <location>
        <begin position="456"/>
        <end position="458"/>
    </location>
</feature>
<feature type="strand" evidence="11">
    <location>
        <begin position="462"/>
        <end position="465"/>
    </location>
</feature>
<feature type="helix" evidence="11">
    <location>
        <begin position="472"/>
        <end position="484"/>
    </location>
</feature>
<feature type="turn" evidence="11">
    <location>
        <begin position="489"/>
        <end position="491"/>
    </location>
</feature>
<feature type="strand" evidence="11">
    <location>
        <begin position="492"/>
        <end position="497"/>
    </location>
</feature>
<feature type="strand" evidence="11">
    <location>
        <begin position="499"/>
        <end position="501"/>
    </location>
</feature>
<feature type="helix" evidence="11">
    <location>
        <begin position="502"/>
        <end position="505"/>
    </location>
</feature>
<feature type="turn" evidence="11">
    <location>
        <begin position="506"/>
        <end position="509"/>
    </location>
</feature>
<feature type="strand" evidence="11">
    <location>
        <begin position="513"/>
        <end position="516"/>
    </location>
</feature>
<feature type="helix" evidence="11">
    <location>
        <begin position="521"/>
        <end position="545"/>
    </location>
</feature>
<feature type="helix" evidence="11">
    <location>
        <begin position="550"/>
        <end position="562"/>
    </location>
</feature>
<feature type="strand" evidence="12">
    <location>
        <begin position="575"/>
        <end position="578"/>
    </location>
</feature>
<feature type="strand" evidence="11">
    <location>
        <begin position="589"/>
        <end position="595"/>
    </location>
</feature>
<feature type="helix" evidence="11">
    <location>
        <begin position="600"/>
        <end position="603"/>
    </location>
</feature>
<feature type="helix" evidence="11">
    <location>
        <begin position="606"/>
        <end position="618"/>
    </location>
</feature>
<feature type="turn" evidence="11">
    <location>
        <begin position="620"/>
        <end position="623"/>
    </location>
</feature>
<feature type="strand" evidence="11">
    <location>
        <begin position="624"/>
        <end position="631"/>
    </location>
</feature>
<feature type="turn" evidence="11">
    <location>
        <begin position="635"/>
        <end position="637"/>
    </location>
</feature>
<feature type="helix" evidence="11">
    <location>
        <begin position="640"/>
        <end position="644"/>
    </location>
</feature>
<feature type="strand" evidence="11">
    <location>
        <begin position="648"/>
        <end position="652"/>
    </location>
</feature>
<feature type="helix" evidence="11">
    <location>
        <begin position="657"/>
        <end position="664"/>
    </location>
</feature>
<feature type="strand" evidence="11">
    <location>
        <begin position="665"/>
        <end position="667"/>
    </location>
</feature>
<feature type="helix" evidence="11">
    <location>
        <begin position="669"/>
        <end position="671"/>
    </location>
</feature>
<feature type="strand" evidence="11">
    <location>
        <begin position="677"/>
        <end position="681"/>
    </location>
</feature>
<feature type="strand" evidence="12">
    <location>
        <begin position="683"/>
        <end position="686"/>
    </location>
</feature>
<feature type="strand" evidence="11">
    <location>
        <begin position="689"/>
        <end position="693"/>
    </location>
</feature>
<feature type="helix" evidence="11">
    <location>
        <begin position="698"/>
        <end position="709"/>
    </location>
</feature>
<feature type="turn" evidence="12">
    <location>
        <begin position="718"/>
        <end position="721"/>
    </location>
</feature>
<feature type="strand" evidence="13">
    <location>
        <begin position="742"/>
        <end position="746"/>
    </location>
</feature>
<feature type="helix" evidence="14">
    <location>
        <begin position="750"/>
        <end position="760"/>
    </location>
</feature>
<feature type="helix" evidence="14">
    <location>
        <begin position="765"/>
        <end position="772"/>
    </location>
</feature>
<feature type="helix" evidence="14">
    <location>
        <begin position="776"/>
        <end position="788"/>
    </location>
</feature>
<feature type="strand" evidence="13">
    <location>
        <begin position="791"/>
        <end position="793"/>
    </location>
</feature>
<gene>
    <name type="primary">ftsK</name>
    <name type="ordered locus">PA2615</name>
</gene>
<reference key="1">
    <citation type="journal article" date="2000" name="Nature">
        <title>Complete genome sequence of Pseudomonas aeruginosa PAO1, an opportunistic pathogen.</title>
        <authorList>
            <person name="Stover C.K."/>
            <person name="Pham X.-Q.T."/>
            <person name="Erwin A.L."/>
            <person name="Mizoguchi S.D."/>
            <person name="Warrener P."/>
            <person name="Hickey M.J."/>
            <person name="Brinkman F.S.L."/>
            <person name="Hufnagle W.O."/>
            <person name="Kowalik D.J."/>
            <person name="Lagrou M."/>
            <person name="Garber R.L."/>
            <person name="Goltry L."/>
            <person name="Tolentino E."/>
            <person name="Westbrock-Wadman S."/>
            <person name="Yuan Y."/>
            <person name="Brody L.L."/>
            <person name="Coulter S.N."/>
            <person name="Folger K.R."/>
            <person name="Kas A."/>
            <person name="Larbig K."/>
            <person name="Lim R.M."/>
            <person name="Smith K.A."/>
            <person name="Spencer D.H."/>
            <person name="Wong G.K.-S."/>
            <person name="Wu Z."/>
            <person name="Paulsen I.T."/>
            <person name="Reizer J."/>
            <person name="Saier M.H. Jr."/>
            <person name="Hancock R.E.W."/>
            <person name="Lory S."/>
            <person name="Olson M.V."/>
        </authorList>
    </citation>
    <scope>NUCLEOTIDE SEQUENCE [LARGE SCALE GENOMIC DNA]</scope>
    <source>
        <strain>ATCC 15692 / DSM 22644 / CIP 104116 / JCM 14847 / LMG 12228 / 1C / PRS 101 / PAO1</strain>
    </source>
</reference>
<reference key="2">
    <citation type="journal article" date="2006" name="Mol. Cell">
        <title>Double-stranded DNA translocation: structure and mechanism of hexameric FtsK.</title>
        <authorList>
            <person name="Massey T.H."/>
            <person name="Mercogliano C.P."/>
            <person name="Yates J."/>
            <person name="Sherratt D.J."/>
            <person name="Lowe J."/>
        </authorList>
    </citation>
    <scope>X-RAY CRYSTALLOGRAPHY (2.25 ANGSTROMS) OF 247-811 IN COMPLEX WITH ADP</scope>
    <scope>FUNCTION AS A TRANSLOCASE</scope>
    <scope>SUBUNIT</scope>
</reference>
<reference key="3">
    <citation type="journal article" date="2006" name="Nat. Struct. Mol. Biol.">
        <title>The FtsK gamma domain directs oriented DNA translocation by interacting with KOPS.</title>
        <authorList>
            <person name="Sivanathan V."/>
            <person name="Allen M.D."/>
            <person name="de Bekker C."/>
            <person name="Baker R."/>
            <person name="Arciszewska L.K."/>
            <person name="Freund S.M."/>
            <person name="Bycroft M."/>
            <person name="Lowe J."/>
            <person name="Sherratt D.J."/>
        </authorList>
    </citation>
    <scope>STRUCTURE BY NMR OF 739-811</scope>
    <scope>DNA-BINDING</scope>
    <scope>DOMAIN</scope>
</reference>
<reference key="4">
    <citation type="journal article" date="2008" name="Mol. Cell">
        <title>Molecular mechanism of sequence-directed DNA loading and translocation by FtsK.</title>
        <authorList>
            <person name="Lowe J."/>
            <person name="Ellonen A."/>
            <person name="Allen M.D."/>
            <person name="Atkinson C."/>
            <person name="Sherratt D.J."/>
            <person name="Grainge I."/>
        </authorList>
    </citation>
    <scope>X-RAY CRYSTALLOGRAPHY (1.40 ANGSTROMS) OF 739-811</scope>
    <scope>FUNCTION</scope>
    <scope>SUBUNIT</scope>
    <scope>DNA-BINDING</scope>
</reference>